<accession>B4SA62</accession>
<reference key="1">
    <citation type="submission" date="2008-06" db="EMBL/GenBank/DDBJ databases">
        <title>Complete sequence of Pelodictyon phaeoclathratiforme BU-1.</title>
        <authorList>
            <consortium name="US DOE Joint Genome Institute"/>
            <person name="Lucas S."/>
            <person name="Copeland A."/>
            <person name="Lapidus A."/>
            <person name="Glavina del Rio T."/>
            <person name="Dalin E."/>
            <person name="Tice H."/>
            <person name="Bruce D."/>
            <person name="Goodwin L."/>
            <person name="Pitluck S."/>
            <person name="Schmutz J."/>
            <person name="Larimer F."/>
            <person name="Land M."/>
            <person name="Hauser L."/>
            <person name="Kyrpides N."/>
            <person name="Mikhailova N."/>
            <person name="Liu Z."/>
            <person name="Li T."/>
            <person name="Zhao F."/>
            <person name="Overmann J."/>
            <person name="Bryant D.A."/>
            <person name="Richardson P."/>
        </authorList>
    </citation>
    <scope>NUCLEOTIDE SEQUENCE [LARGE SCALE GENOMIC DNA]</scope>
    <source>
        <strain>DSM 5477 / BU-1</strain>
    </source>
</reference>
<proteinExistence type="inferred from homology"/>
<organism>
    <name type="scientific">Pelodictyon phaeoclathratiforme (strain DSM 5477 / BU-1)</name>
    <dbReference type="NCBI Taxonomy" id="324925"/>
    <lineage>
        <taxon>Bacteria</taxon>
        <taxon>Pseudomonadati</taxon>
        <taxon>Chlorobiota</taxon>
        <taxon>Chlorobiia</taxon>
        <taxon>Chlorobiales</taxon>
        <taxon>Chlorobiaceae</taxon>
        <taxon>Chlorobium/Pelodictyon group</taxon>
        <taxon>Pelodictyon</taxon>
    </lineage>
</organism>
<protein>
    <recommendedName>
        <fullName evidence="1">Probable dual-specificity RNA methyltransferase RlmN</fullName>
        <ecNumber evidence="1">2.1.1.192</ecNumber>
    </recommendedName>
    <alternativeName>
        <fullName evidence="1">23S rRNA (adenine(2503)-C(2))-methyltransferase</fullName>
    </alternativeName>
    <alternativeName>
        <fullName evidence="1">23S rRNA m2A2503 methyltransferase</fullName>
    </alternativeName>
    <alternativeName>
        <fullName evidence="1">Ribosomal RNA large subunit methyltransferase N</fullName>
    </alternativeName>
    <alternativeName>
        <fullName evidence="1">tRNA (adenine(37)-C(2))-methyltransferase</fullName>
    </alternativeName>
    <alternativeName>
        <fullName evidence="1">tRNA m2A37 methyltransferase</fullName>
    </alternativeName>
</protein>
<gene>
    <name evidence="1" type="primary">rlmN</name>
    <name type="ordered locus">Ppha_1508</name>
</gene>
<sequence length="359" mass="40006">MSEQQQNITDLTLTELQQALSLLGEPAFRATQIHQWLFSHHAASFEEMTILSLALRKKLSESFSIHPLKRVEHQECFEEDCESPTEKILLELQDKSRVESVLIATENRRTACVSSQIGCPLQCPFCATGQMGFRRNLTAGEITGQIYALNELVGAKEPGKSLTNIVFMGMGEPLLNTGNVIEAIETLSTRNYRFCLSQKRITISTVGVIPEIQRLGKSGMKTKLAVSLHAADQQKRESLMPIASRQYPLKELGTALSEYTQSTGMPVTIVYLLLKGINDSLDDAKMLARFSKTFLCKINLIDYNSIINIKFKPVYSATRDMFQQYLINSGLHVTIRKSYGTTINAACGQLATASMQNPQ</sequence>
<comment type="function">
    <text evidence="1">Specifically methylates position 2 of adenine 2503 in 23S rRNA and position 2 of adenine 37 in tRNAs.</text>
</comment>
<comment type="catalytic activity">
    <reaction evidence="1">
        <text>adenosine(2503) in 23S rRNA + 2 reduced [2Fe-2S]-[ferredoxin] + 2 S-adenosyl-L-methionine = 2-methyladenosine(2503) in 23S rRNA + 5'-deoxyadenosine + L-methionine + 2 oxidized [2Fe-2S]-[ferredoxin] + S-adenosyl-L-homocysteine</text>
        <dbReference type="Rhea" id="RHEA:42916"/>
        <dbReference type="Rhea" id="RHEA-COMP:10000"/>
        <dbReference type="Rhea" id="RHEA-COMP:10001"/>
        <dbReference type="Rhea" id="RHEA-COMP:10152"/>
        <dbReference type="Rhea" id="RHEA-COMP:10282"/>
        <dbReference type="ChEBI" id="CHEBI:17319"/>
        <dbReference type="ChEBI" id="CHEBI:33737"/>
        <dbReference type="ChEBI" id="CHEBI:33738"/>
        <dbReference type="ChEBI" id="CHEBI:57844"/>
        <dbReference type="ChEBI" id="CHEBI:57856"/>
        <dbReference type="ChEBI" id="CHEBI:59789"/>
        <dbReference type="ChEBI" id="CHEBI:74411"/>
        <dbReference type="ChEBI" id="CHEBI:74497"/>
        <dbReference type="EC" id="2.1.1.192"/>
    </reaction>
</comment>
<comment type="catalytic activity">
    <reaction evidence="1">
        <text>adenosine(37) in tRNA + 2 reduced [2Fe-2S]-[ferredoxin] + 2 S-adenosyl-L-methionine = 2-methyladenosine(37) in tRNA + 5'-deoxyadenosine + L-methionine + 2 oxidized [2Fe-2S]-[ferredoxin] + S-adenosyl-L-homocysteine</text>
        <dbReference type="Rhea" id="RHEA:43332"/>
        <dbReference type="Rhea" id="RHEA-COMP:10000"/>
        <dbReference type="Rhea" id="RHEA-COMP:10001"/>
        <dbReference type="Rhea" id="RHEA-COMP:10162"/>
        <dbReference type="Rhea" id="RHEA-COMP:10485"/>
        <dbReference type="ChEBI" id="CHEBI:17319"/>
        <dbReference type="ChEBI" id="CHEBI:33737"/>
        <dbReference type="ChEBI" id="CHEBI:33738"/>
        <dbReference type="ChEBI" id="CHEBI:57844"/>
        <dbReference type="ChEBI" id="CHEBI:57856"/>
        <dbReference type="ChEBI" id="CHEBI:59789"/>
        <dbReference type="ChEBI" id="CHEBI:74411"/>
        <dbReference type="ChEBI" id="CHEBI:74497"/>
        <dbReference type="EC" id="2.1.1.192"/>
    </reaction>
</comment>
<comment type="cofactor">
    <cofactor evidence="1">
        <name>[4Fe-4S] cluster</name>
        <dbReference type="ChEBI" id="CHEBI:49883"/>
    </cofactor>
    <text evidence="1">Binds 1 [4Fe-4S] cluster. The cluster is coordinated with 3 cysteines and an exchangeable S-adenosyl-L-methionine.</text>
</comment>
<comment type="subcellular location">
    <subcellularLocation>
        <location evidence="1">Cytoplasm</location>
    </subcellularLocation>
</comment>
<comment type="miscellaneous">
    <text evidence="1">Reaction proceeds by a ping-pong mechanism involving intermediate methylation of a conserved cysteine residue.</text>
</comment>
<comment type="similarity">
    <text evidence="1">Belongs to the radical SAM superfamily. RlmN family.</text>
</comment>
<dbReference type="EC" id="2.1.1.192" evidence="1"/>
<dbReference type="EMBL" id="CP001110">
    <property type="protein sequence ID" value="ACF43758.1"/>
    <property type="molecule type" value="Genomic_DNA"/>
</dbReference>
<dbReference type="RefSeq" id="WP_012508246.1">
    <property type="nucleotide sequence ID" value="NC_011060.1"/>
</dbReference>
<dbReference type="SMR" id="B4SA62"/>
<dbReference type="STRING" id="324925.Ppha_1508"/>
<dbReference type="KEGG" id="pph:Ppha_1508"/>
<dbReference type="eggNOG" id="COG0820">
    <property type="taxonomic scope" value="Bacteria"/>
</dbReference>
<dbReference type="HOGENOM" id="CLU_029101_0_0_10"/>
<dbReference type="OrthoDB" id="9793973at2"/>
<dbReference type="Proteomes" id="UP000002724">
    <property type="component" value="Chromosome"/>
</dbReference>
<dbReference type="GO" id="GO:0005737">
    <property type="term" value="C:cytoplasm"/>
    <property type="evidence" value="ECO:0007669"/>
    <property type="project" value="UniProtKB-SubCell"/>
</dbReference>
<dbReference type="GO" id="GO:0051539">
    <property type="term" value="F:4 iron, 4 sulfur cluster binding"/>
    <property type="evidence" value="ECO:0007669"/>
    <property type="project" value="UniProtKB-UniRule"/>
</dbReference>
<dbReference type="GO" id="GO:0046872">
    <property type="term" value="F:metal ion binding"/>
    <property type="evidence" value="ECO:0007669"/>
    <property type="project" value="UniProtKB-KW"/>
</dbReference>
<dbReference type="GO" id="GO:0070040">
    <property type="term" value="F:rRNA (adenine(2503)-C2-)-methyltransferase activity"/>
    <property type="evidence" value="ECO:0007669"/>
    <property type="project" value="UniProtKB-UniRule"/>
</dbReference>
<dbReference type="GO" id="GO:0019843">
    <property type="term" value="F:rRNA binding"/>
    <property type="evidence" value="ECO:0007669"/>
    <property type="project" value="UniProtKB-UniRule"/>
</dbReference>
<dbReference type="GO" id="GO:0002935">
    <property type="term" value="F:tRNA (adenine(37)-C2)-methyltransferase activity"/>
    <property type="evidence" value="ECO:0007669"/>
    <property type="project" value="UniProtKB-UniRule"/>
</dbReference>
<dbReference type="GO" id="GO:0000049">
    <property type="term" value="F:tRNA binding"/>
    <property type="evidence" value="ECO:0007669"/>
    <property type="project" value="UniProtKB-UniRule"/>
</dbReference>
<dbReference type="GO" id="GO:0070475">
    <property type="term" value="P:rRNA base methylation"/>
    <property type="evidence" value="ECO:0007669"/>
    <property type="project" value="UniProtKB-UniRule"/>
</dbReference>
<dbReference type="GO" id="GO:0030488">
    <property type="term" value="P:tRNA methylation"/>
    <property type="evidence" value="ECO:0007669"/>
    <property type="project" value="UniProtKB-UniRule"/>
</dbReference>
<dbReference type="CDD" id="cd01335">
    <property type="entry name" value="Radical_SAM"/>
    <property type="match status" value="1"/>
</dbReference>
<dbReference type="Gene3D" id="1.10.150.530">
    <property type="match status" value="1"/>
</dbReference>
<dbReference type="Gene3D" id="3.20.20.70">
    <property type="entry name" value="Aldolase class I"/>
    <property type="match status" value="1"/>
</dbReference>
<dbReference type="HAMAP" id="MF_01849">
    <property type="entry name" value="RNA_methyltr_RlmN"/>
    <property type="match status" value="1"/>
</dbReference>
<dbReference type="InterPro" id="IPR013785">
    <property type="entry name" value="Aldolase_TIM"/>
</dbReference>
<dbReference type="InterPro" id="IPR040072">
    <property type="entry name" value="Methyltransferase_A"/>
</dbReference>
<dbReference type="InterPro" id="IPR048641">
    <property type="entry name" value="RlmN_N"/>
</dbReference>
<dbReference type="InterPro" id="IPR027492">
    <property type="entry name" value="RNA_MTrfase_RlmN"/>
</dbReference>
<dbReference type="InterPro" id="IPR004383">
    <property type="entry name" value="rRNA_lsu_MTrfase_RlmN/Cfr"/>
</dbReference>
<dbReference type="InterPro" id="IPR007197">
    <property type="entry name" value="rSAM"/>
</dbReference>
<dbReference type="NCBIfam" id="TIGR00048">
    <property type="entry name" value="rRNA_mod_RlmN"/>
    <property type="match status" value="1"/>
</dbReference>
<dbReference type="PANTHER" id="PTHR30544">
    <property type="entry name" value="23S RRNA METHYLTRANSFERASE"/>
    <property type="match status" value="1"/>
</dbReference>
<dbReference type="PANTHER" id="PTHR30544:SF5">
    <property type="entry name" value="RADICAL SAM CORE DOMAIN-CONTAINING PROTEIN"/>
    <property type="match status" value="1"/>
</dbReference>
<dbReference type="Pfam" id="PF04055">
    <property type="entry name" value="Radical_SAM"/>
    <property type="match status" value="1"/>
</dbReference>
<dbReference type="Pfam" id="PF21016">
    <property type="entry name" value="RlmN_N"/>
    <property type="match status" value="1"/>
</dbReference>
<dbReference type="PIRSF" id="PIRSF006004">
    <property type="entry name" value="CHP00048"/>
    <property type="match status" value="1"/>
</dbReference>
<dbReference type="SFLD" id="SFLDF00275">
    <property type="entry name" value="adenosine_C2_methyltransferase"/>
    <property type="match status" value="1"/>
</dbReference>
<dbReference type="SFLD" id="SFLDS00029">
    <property type="entry name" value="Radical_SAM"/>
    <property type="match status" value="1"/>
</dbReference>
<dbReference type="SUPFAM" id="SSF102114">
    <property type="entry name" value="Radical SAM enzymes"/>
    <property type="match status" value="1"/>
</dbReference>
<dbReference type="PROSITE" id="PS51918">
    <property type="entry name" value="RADICAL_SAM"/>
    <property type="match status" value="1"/>
</dbReference>
<feature type="chain" id="PRO_1000188587" description="Probable dual-specificity RNA methyltransferase RlmN">
    <location>
        <begin position="1"/>
        <end position="359"/>
    </location>
</feature>
<feature type="domain" description="Radical SAM core" evidence="2">
    <location>
        <begin position="105"/>
        <end position="342"/>
    </location>
</feature>
<feature type="active site" description="Proton acceptor" evidence="1">
    <location>
        <position position="99"/>
    </location>
</feature>
<feature type="active site" description="S-methylcysteine intermediate" evidence="1">
    <location>
        <position position="347"/>
    </location>
</feature>
<feature type="binding site" evidence="1">
    <location>
        <position position="119"/>
    </location>
    <ligand>
        <name>[4Fe-4S] cluster</name>
        <dbReference type="ChEBI" id="CHEBI:49883"/>
        <note>4Fe-4S-S-AdoMet</note>
    </ligand>
</feature>
<feature type="binding site" evidence="1">
    <location>
        <position position="123"/>
    </location>
    <ligand>
        <name>[4Fe-4S] cluster</name>
        <dbReference type="ChEBI" id="CHEBI:49883"/>
        <note>4Fe-4S-S-AdoMet</note>
    </ligand>
</feature>
<feature type="binding site" evidence="1">
    <location>
        <position position="126"/>
    </location>
    <ligand>
        <name>[4Fe-4S] cluster</name>
        <dbReference type="ChEBI" id="CHEBI:49883"/>
        <note>4Fe-4S-S-AdoMet</note>
    </ligand>
</feature>
<feature type="binding site" evidence="1">
    <location>
        <begin position="171"/>
        <end position="172"/>
    </location>
    <ligand>
        <name>S-adenosyl-L-methionine</name>
        <dbReference type="ChEBI" id="CHEBI:59789"/>
    </ligand>
</feature>
<feature type="binding site" evidence="1">
    <location>
        <position position="204"/>
    </location>
    <ligand>
        <name>S-adenosyl-L-methionine</name>
        <dbReference type="ChEBI" id="CHEBI:59789"/>
    </ligand>
</feature>
<feature type="binding site" evidence="1">
    <location>
        <begin position="227"/>
        <end position="229"/>
    </location>
    <ligand>
        <name>S-adenosyl-L-methionine</name>
        <dbReference type="ChEBI" id="CHEBI:59789"/>
    </ligand>
</feature>
<feature type="binding site" evidence="1">
    <location>
        <position position="304"/>
    </location>
    <ligand>
        <name>S-adenosyl-L-methionine</name>
        <dbReference type="ChEBI" id="CHEBI:59789"/>
    </ligand>
</feature>
<feature type="disulfide bond" description="(transient)" evidence="1">
    <location>
        <begin position="112"/>
        <end position="347"/>
    </location>
</feature>
<name>RLMN_PELPB</name>
<evidence type="ECO:0000255" key="1">
    <source>
        <dbReference type="HAMAP-Rule" id="MF_01849"/>
    </source>
</evidence>
<evidence type="ECO:0000255" key="2">
    <source>
        <dbReference type="PROSITE-ProRule" id="PRU01266"/>
    </source>
</evidence>
<keyword id="KW-0004">4Fe-4S</keyword>
<keyword id="KW-0963">Cytoplasm</keyword>
<keyword id="KW-1015">Disulfide bond</keyword>
<keyword id="KW-0408">Iron</keyword>
<keyword id="KW-0411">Iron-sulfur</keyword>
<keyword id="KW-0479">Metal-binding</keyword>
<keyword id="KW-0489">Methyltransferase</keyword>
<keyword id="KW-1185">Reference proteome</keyword>
<keyword id="KW-0698">rRNA processing</keyword>
<keyword id="KW-0949">S-adenosyl-L-methionine</keyword>
<keyword id="KW-0808">Transferase</keyword>
<keyword id="KW-0819">tRNA processing</keyword>